<sequence length="151" mass="17033">MTTNTHTLQIEEILELLPHRFPFLLVDRVLDFEEGRFLRAVKNVSVNEPFFQGHFPGKPIFPGVLILEAMAQATGILAFKSVGKLEPGELYYFAGIDEARFKRPVVPGDQMIMEVTFEKTRRGLTRFKGVALVDGKVVCEATMMCARSREA</sequence>
<accession>B1LGY2</accession>
<feature type="chain" id="PRO_1000197298" description="3-hydroxyacyl-[acyl-carrier-protein] dehydratase FabZ">
    <location>
        <begin position="1"/>
        <end position="151"/>
    </location>
</feature>
<feature type="active site" evidence="1">
    <location>
        <position position="54"/>
    </location>
</feature>
<evidence type="ECO:0000255" key="1">
    <source>
        <dbReference type="HAMAP-Rule" id="MF_00406"/>
    </source>
</evidence>
<proteinExistence type="inferred from homology"/>
<dbReference type="EC" id="4.2.1.59" evidence="1"/>
<dbReference type="EMBL" id="CP000970">
    <property type="protein sequence ID" value="ACB16297.1"/>
    <property type="molecule type" value="Genomic_DNA"/>
</dbReference>
<dbReference type="RefSeq" id="WP_000210739.1">
    <property type="nucleotide sequence ID" value="NC_010498.1"/>
</dbReference>
<dbReference type="SMR" id="B1LGY2"/>
<dbReference type="GeneID" id="93777245"/>
<dbReference type="KEGG" id="ecm:EcSMS35_0191"/>
<dbReference type="HOGENOM" id="CLU_078912_1_0_6"/>
<dbReference type="Proteomes" id="UP000007011">
    <property type="component" value="Chromosome"/>
</dbReference>
<dbReference type="GO" id="GO:0005737">
    <property type="term" value="C:cytoplasm"/>
    <property type="evidence" value="ECO:0007669"/>
    <property type="project" value="UniProtKB-SubCell"/>
</dbReference>
<dbReference type="GO" id="GO:0016020">
    <property type="term" value="C:membrane"/>
    <property type="evidence" value="ECO:0007669"/>
    <property type="project" value="GOC"/>
</dbReference>
<dbReference type="GO" id="GO:0019171">
    <property type="term" value="F:(3R)-hydroxyacyl-[acyl-carrier-protein] dehydratase activity"/>
    <property type="evidence" value="ECO:0007669"/>
    <property type="project" value="UniProtKB-EC"/>
</dbReference>
<dbReference type="GO" id="GO:0006633">
    <property type="term" value="P:fatty acid biosynthetic process"/>
    <property type="evidence" value="ECO:0007669"/>
    <property type="project" value="UniProtKB-UniRule"/>
</dbReference>
<dbReference type="GO" id="GO:0009245">
    <property type="term" value="P:lipid A biosynthetic process"/>
    <property type="evidence" value="ECO:0007669"/>
    <property type="project" value="UniProtKB-UniRule"/>
</dbReference>
<dbReference type="CDD" id="cd01288">
    <property type="entry name" value="FabZ"/>
    <property type="match status" value="1"/>
</dbReference>
<dbReference type="FunFam" id="3.10.129.10:FF:000001">
    <property type="entry name" value="3-hydroxyacyl-[acyl-carrier-protein] dehydratase FabZ"/>
    <property type="match status" value="1"/>
</dbReference>
<dbReference type="Gene3D" id="3.10.129.10">
    <property type="entry name" value="Hotdog Thioesterase"/>
    <property type="match status" value="1"/>
</dbReference>
<dbReference type="HAMAP" id="MF_00406">
    <property type="entry name" value="FabZ"/>
    <property type="match status" value="1"/>
</dbReference>
<dbReference type="InterPro" id="IPR013114">
    <property type="entry name" value="FabA_FabZ"/>
</dbReference>
<dbReference type="InterPro" id="IPR010084">
    <property type="entry name" value="FabZ"/>
</dbReference>
<dbReference type="InterPro" id="IPR029069">
    <property type="entry name" value="HotDog_dom_sf"/>
</dbReference>
<dbReference type="NCBIfam" id="TIGR01750">
    <property type="entry name" value="fabZ"/>
    <property type="match status" value="1"/>
</dbReference>
<dbReference type="NCBIfam" id="NF000582">
    <property type="entry name" value="PRK00006.1"/>
    <property type="match status" value="1"/>
</dbReference>
<dbReference type="PANTHER" id="PTHR30272">
    <property type="entry name" value="3-HYDROXYACYL-[ACYL-CARRIER-PROTEIN] DEHYDRATASE"/>
    <property type="match status" value="1"/>
</dbReference>
<dbReference type="PANTHER" id="PTHR30272:SF1">
    <property type="entry name" value="3-HYDROXYACYL-[ACYL-CARRIER-PROTEIN] DEHYDRATASE"/>
    <property type="match status" value="1"/>
</dbReference>
<dbReference type="Pfam" id="PF07977">
    <property type="entry name" value="FabA"/>
    <property type="match status" value="1"/>
</dbReference>
<dbReference type="SUPFAM" id="SSF54637">
    <property type="entry name" value="Thioesterase/thiol ester dehydrase-isomerase"/>
    <property type="match status" value="1"/>
</dbReference>
<reference key="1">
    <citation type="journal article" date="2008" name="J. Bacteriol.">
        <title>Insights into the environmental resistance gene pool from the genome sequence of the multidrug-resistant environmental isolate Escherichia coli SMS-3-5.</title>
        <authorList>
            <person name="Fricke W.F."/>
            <person name="Wright M.S."/>
            <person name="Lindell A.H."/>
            <person name="Harkins D.M."/>
            <person name="Baker-Austin C."/>
            <person name="Ravel J."/>
            <person name="Stepanauskas R."/>
        </authorList>
    </citation>
    <scope>NUCLEOTIDE SEQUENCE [LARGE SCALE GENOMIC DNA]</scope>
    <source>
        <strain>SMS-3-5 / SECEC</strain>
    </source>
</reference>
<keyword id="KW-0963">Cytoplasm</keyword>
<keyword id="KW-0441">Lipid A biosynthesis</keyword>
<keyword id="KW-0444">Lipid biosynthesis</keyword>
<keyword id="KW-0443">Lipid metabolism</keyword>
<keyword id="KW-0456">Lyase</keyword>
<comment type="function">
    <text evidence="1">Involved in unsaturated fatty acids biosynthesis. Catalyzes the dehydration of short chain beta-hydroxyacyl-ACPs and long chain saturated and unsaturated beta-hydroxyacyl-ACPs.</text>
</comment>
<comment type="catalytic activity">
    <reaction evidence="1">
        <text>a (3R)-hydroxyacyl-[ACP] = a (2E)-enoyl-[ACP] + H2O</text>
        <dbReference type="Rhea" id="RHEA:13097"/>
        <dbReference type="Rhea" id="RHEA-COMP:9925"/>
        <dbReference type="Rhea" id="RHEA-COMP:9945"/>
        <dbReference type="ChEBI" id="CHEBI:15377"/>
        <dbReference type="ChEBI" id="CHEBI:78784"/>
        <dbReference type="ChEBI" id="CHEBI:78827"/>
        <dbReference type="EC" id="4.2.1.59"/>
    </reaction>
</comment>
<comment type="subunit">
    <text evidence="1">Oligomer.</text>
</comment>
<comment type="subcellular location">
    <subcellularLocation>
        <location evidence="1">Cytoplasm</location>
    </subcellularLocation>
</comment>
<comment type="PTM">
    <text evidence="1">The N-terminus is blocked.</text>
</comment>
<comment type="similarity">
    <text evidence="1">Belongs to the thioester dehydratase family. FabZ subfamily.</text>
</comment>
<gene>
    <name evidence="1" type="primary">fabZ</name>
    <name type="ordered locus">EcSMS35_0191</name>
</gene>
<organism>
    <name type="scientific">Escherichia coli (strain SMS-3-5 / SECEC)</name>
    <dbReference type="NCBI Taxonomy" id="439855"/>
    <lineage>
        <taxon>Bacteria</taxon>
        <taxon>Pseudomonadati</taxon>
        <taxon>Pseudomonadota</taxon>
        <taxon>Gammaproteobacteria</taxon>
        <taxon>Enterobacterales</taxon>
        <taxon>Enterobacteriaceae</taxon>
        <taxon>Escherichia</taxon>
    </lineage>
</organism>
<name>FABZ_ECOSM</name>
<protein>
    <recommendedName>
        <fullName evidence="1">3-hydroxyacyl-[acyl-carrier-protein] dehydratase FabZ</fullName>
        <ecNumber evidence="1">4.2.1.59</ecNumber>
    </recommendedName>
    <alternativeName>
        <fullName evidence="1">(3R)-hydroxymyristoyl-[acyl-carrier-protein] dehydratase</fullName>
        <shortName evidence="1">(3R)-hydroxymyristoyl-ACP dehydrase</shortName>
    </alternativeName>
    <alternativeName>
        <fullName evidence="1">Beta-hydroxyacyl-ACP dehydratase</fullName>
    </alternativeName>
</protein>